<proteinExistence type="evidence at protein level"/>
<feature type="signal peptide" evidence="1">
    <location>
        <begin position="1"/>
        <end position="18"/>
    </location>
</feature>
<feature type="chain" id="PRO_0000450040" description="Exocyst complex component EXO70I">
    <location>
        <begin position="19"/>
        <end position="712"/>
    </location>
</feature>
<feature type="coiled-coil region" evidence="1">
    <location>
        <begin position="26"/>
        <end position="53"/>
    </location>
</feature>
<feature type="glycosylation site" description="N-linked (GlcNAc...) asparagine" evidence="2">
    <location>
        <position position="111"/>
    </location>
</feature>
<comment type="function">
    <text evidence="3">Component of an exocyst subcomplex specifically required for periarbuscular membrane (PAM) biogenesis during arbuscular mycorrhizal (AM) symbiosis with AM fungi (e.g. Glomus versiforme), especially critical during the early branching phase of arbuscule development; probably involved in STR and STR2 delivery into the PAM.</text>
</comment>
<comment type="subunit">
    <text evidence="3 6">Subunit of the exocyst complex that mediates vesicle tethering during exocytosis (Probable). Interacts with VPY at the periarbuscular membrane (PAM) around the arbuscule hyphal tips (PubMed:26234213).</text>
</comment>
<comment type="subcellular location">
    <subcellularLocation>
        <location evidence="3">Cell membrane</location>
        <topology evidence="6">Peripheral membrane protein</topology>
        <orientation evidence="6">Cytoplasmic side</orientation>
    </subcellularLocation>
    <text evidence="3">During arbuscule branching, restricted to zones adjacent to the periarbuscular membrane (PAM) around the arbuscule hyphal tips.</text>
</comment>
<comment type="tissue specificity">
    <text evidence="3">Present at low levels in non-mycorrhizal root tips.</text>
</comment>
<comment type="developmental stage">
    <text evidence="3">During arbuscular mycorrhizal (AM) symbiosis with (AM) fungi (e.g. Glomus versiforme), accumulates strongly in cortical cells containing arbuscules.</text>
</comment>
<comment type="induction">
    <text evidence="3 4">Accumulates in roots, in a RAM1-dependent manner, during colonization by arbuscular mycorrhizal fungi (e.g. Glomus versiforme) (PubMed:26234213, PubMed:26511916). Triggered by RAM1 (PubMed:26511916). Induced during root nodule symbiosis with rhizobium bacteria (e.g. Sinorhizobium meliloti) (PubMed:26234213).</text>
</comment>
<comment type="disruption phenotype">
    <text evidence="3">Abnormal arbuscule development (reduced arbuscule branching and aberrant hyphal branches frequently distorted in shape) during arbuscular mycorrhizal (AM) symbiosis with AM fungi (e.g. Glomus versiforme) characterized by reduced STR and STR2 incorporation into the periarbuscular membrane (PAM) (PubMed:26234213). Normal root nodules development during symbiosis with rhizobium bacteria (e.g. Sinorhizobium meliloti) (PubMed:26234213).</text>
</comment>
<comment type="similarity">
    <text evidence="6">Belongs to the EXO70 family.</text>
</comment>
<comment type="sequence caution" evidence="6">
    <conflict type="erroneous initiation">
        <sequence resource="EMBL-CDS" id="AES59305"/>
    </conflict>
    <text>Truncated N-terminus.</text>
</comment>
<evidence type="ECO:0000255" key="1"/>
<evidence type="ECO:0000255" key="2">
    <source>
        <dbReference type="PROSITE-ProRule" id="PRU00498"/>
    </source>
</evidence>
<evidence type="ECO:0000269" key="3">
    <source>
    </source>
</evidence>
<evidence type="ECO:0000269" key="4">
    <source>
    </source>
</evidence>
<evidence type="ECO:0000303" key="5">
    <source>
    </source>
</evidence>
<evidence type="ECO:0000305" key="6"/>
<evidence type="ECO:0000312" key="7">
    <source>
        <dbReference type="EMBL" id="AES59305.1"/>
    </source>
</evidence>
<evidence type="ECO:0000312" key="8">
    <source>
        <dbReference type="EMBL" id="RHN77220.1"/>
    </source>
</evidence>
<protein>
    <recommendedName>
        <fullName evidence="5">Exocyst complex component EXO70I</fullName>
        <shortName evidence="5">MtExo70I</shortName>
    </recommendedName>
    <alternativeName>
        <fullName evidence="5">Exocyst subunit Exo70 family protein I</fullName>
    </alternativeName>
</protein>
<name>EX70I_MEDTR</name>
<reference key="1">
    <citation type="journal article" date="2011" name="Nature">
        <title>The Medicago genome provides insight into the evolution of rhizobial symbioses.</title>
        <authorList>
            <person name="Young N.D."/>
            <person name="Debelle F."/>
            <person name="Oldroyd G.E.D."/>
            <person name="Geurts R."/>
            <person name="Cannon S.B."/>
            <person name="Udvardi M.K."/>
            <person name="Benedito V.A."/>
            <person name="Mayer K.F.X."/>
            <person name="Gouzy J."/>
            <person name="Schoof H."/>
            <person name="Van de Peer Y."/>
            <person name="Proost S."/>
            <person name="Cook D.R."/>
            <person name="Meyers B.C."/>
            <person name="Spannagl M."/>
            <person name="Cheung F."/>
            <person name="De Mita S."/>
            <person name="Krishnakumar V."/>
            <person name="Gundlach H."/>
            <person name="Zhou S."/>
            <person name="Mudge J."/>
            <person name="Bharti A.K."/>
            <person name="Murray J.D."/>
            <person name="Naoumkina M.A."/>
            <person name="Rosen B."/>
            <person name="Silverstein K.A.T."/>
            <person name="Tang H."/>
            <person name="Rombauts S."/>
            <person name="Zhao P.X."/>
            <person name="Zhou P."/>
            <person name="Barbe V."/>
            <person name="Bardou P."/>
            <person name="Bechner M."/>
            <person name="Bellec A."/>
            <person name="Berger A."/>
            <person name="Berges H."/>
            <person name="Bidwell S."/>
            <person name="Bisseling T."/>
            <person name="Choisne N."/>
            <person name="Couloux A."/>
            <person name="Denny R."/>
            <person name="Deshpande S."/>
            <person name="Dai X."/>
            <person name="Doyle J.J."/>
            <person name="Dudez A.-M."/>
            <person name="Farmer A.D."/>
            <person name="Fouteau S."/>
            <person name="Franken C."/>
            <person name="Gibelin C."/>
            <person name="Gish J."/>
            <person name="Goldstein S."/>
            <person name="Gonzalez A.J."/>
            <person name="Green P.J."/>
            <person name="Hallab A."/>
            <person name="Hartog M."/>
            <person name="Hua A."/>
            <person name="Humphray S.J."/>
            <person name="Jeong D.-H."/>
            <person name="Jing Y."/>
            <person name="Jocker A."/>
            <person name="Kenton S.M."/>
            <person name="Kim D.-J."/>
            <person name="Klee K."/>
            <person name="Lai H."/>
            <person name="Lang C."/>
            <person name="Lin S."/>
            <person name="Macmil S.L."/>
            <person name="Magdelenat G."/>
            <person name="Matthews L."/>
            <person name="McCorrison J."/>
            <person name="Monaghan E.L."/>
            <person name="Mun J.-H."/>
            <person name="Najar F.Z."/>
            <person name="Nicholson C."/>
            <person name="Noirot C."/>
            <person name="O'Bleness M."/>
            <person name="Paule C.R."/>
            <person name="Poulain J."/>
            <person name="Prion F."/>
            <person name="Qin B."/>
            <person name="Qu C."/>
            <person name="Retzel E.F."/>
            <person name="Riddle C."/>
            <person name="Sallet E."/>
            <person name="Samain S."/>
            <person name="Samson N."/>
            <person name="Sanders I."/>
            <person name="Saurat O."/>
            <person name="Scarpelli C."/>
            <person name="Schiex T."/>
            <person name="Segurens B."/>
            <person name="Severin A.J."/>
            <person name="Sherrier D.J."/>
            <person name="Shi R."/>
            <person name="Sims S."/>
            <person name="Singer S.R."/>
            <person name="Sinharoy S."/>
            <person name="Sterck L."/>
            <person name="Viollet A."/>
            <person name="Wang B.-B."/>
            <person name="Wang K."/>
            <person name="Wang M."/>
            <person name="Wang X."/>
            <person name="Warfsmann J."/>
            <person name="Weissenbach J."/>
            <person name="White D.D."/>
            <person name="White J.D."/>
            <person name="Wiley G.B."/>
            <person name="Wincker P."/>
            <person name="Xing Y."/>
            <person name="Yang L."/>
            <person name="Yao Z."/>
            <person name="Ying F."/>
            <person name="Zhai J."/>
            <person name="Zhou L."/>
            <person name="Zuber A."/>
            <person name="Denarie J."/>
            <person name="Dixon R.A."/>
            <person name="May G.D."/>
            <person name="Schwartz D.C."/>
            <person name="Rogers J."/>
            <person name="Quetier F."/>
            <person name="Town C.D."/>
            <person name="Roe B.A."/>
        </authorList>
    </citation>
    <scope>NUCLEOTIDE SEQUENCE [LARGE SCALE GENOMIC DNA]</scope>
    <source>
        <strain>cv. Jemalong A17</strain>
    </source>
</reference>
<reference key="2">
    <citation type="journal article" date="2014" name="BMC Genomics">
        <title>An improved genome release (version Mt4.0) for the model legume Medicago truncatula.</title>
        <authorList>
            <person name="Tang H."/>
            <person name="Krishnakumar V."/>
            <person name="Bidwell S."/>
            <person name="Rosen B."/>
            <person name="Chan A."/>
            <person name="Zhou S."/>
            <person name="Gentzbittel L."/>
            <person name="Childs K.L."/>
            <person name="Yandell M."/>
            <person name="Gundlach H."/>
            <person name="Mayer K.F."/>
            <person name="Schwartz D.C."/>
            <person name="Town C.D."/>
        </authorList>
    </citation>
    <scope>GENOME REANNOTATION</scope>
    <source>
        <strain>cv. Jemalong A17</strain>
    </source>
</reference>
<reference key="3">
    <citation type="journal article" date="2018" name="Nat. Plants">
        <title>Whole-genome landscape of Medicago truncatula symbiotic genes.</title>
        <authorList>
            <person name="Pecrix Y."/>
            <person name="Staton S.E."/>
            <person name="Sallet E."/>
            <person name="Lelandais-Briere C."/>
            <person name="Moreau S."/>
            <person name="Carrere S."/>
            <person name="Blein T."/>
            <person name="Jardinaud M.F."/>
            <person name="Latrasse D."/>
            <person name="Zouine M."/>
            <person name="Zahm M."/>
            <person name="Kreplak J."/>
            <person name="Mayjonade B."/>
            <person name="Satge C."/>
            <person name="Perez M."/>
            <person name="Cauet S."/>
            <person name="Marande W."/>
            <person name="Chantry-Darmon C."/>
            <person name="Lopez-Roques C."/>
            <person name="Bouchez O."/>
            <person name="Berard A."/>
            <person name="Debelle F."/>
            <person name="Munos S."/>
            <person name="Bendahmane A."/>
            <person name="Berges H."/>
            <person name="Niebel A."/>
            <person name="Buitink J."/>
            <person name="Frugier F."/>
            <person name="Benhamed M."/>
            <person name="Crespi M."/>
            <person name="Gouzy J."/>
            <person name="Gamas P."/>
        </authorList>
    </citation>
    <scope>NUCLEOTIDE SEQUENCE [LARGE SCALE GENOMIC DNA]</scope>
    <source>
        <strain>cv. Jemalong A17</strain>
    </source>
</reference>
<reference key="4">
    <citation type="journal article" date="2015" name="Curr. Biol.">
        <title>EXO70I is required for development of a sub-domain of the periarbuscular membrane during arbuscular mycorrhizal symbiosis.</title>
        <authorList>
            <person name="Zhang X."/>
            <person name="Pumplin N."/>
            <person name="Ivanov S."/>
            <person name="Harrison M.J."/>
        </authorList>
    </citation>
    <scope>FUNCTION</scope>
    <scope>DISRUPTION PHENOTYPE</scope>
    <scope>SUBCELLULAR LOCATION</scope>
    <scope>INTERACTION WITH VPY</scope>
    <scope>INDUCTION BY ARBUSCULAR MYCORRHIZAL FUNGI</scope>
    <scope>DEVELOPMENTAL STAGE</scope>
    <scope>TISSUE SPECIFICITY</scope>
</reference>
<reference key="5">
    <citation type="journal article" date="2015" name="Plant Physiol.">
        <title>Hyphal branching during arbuscule development requires reduced arbuscular mycorrhiza1.</title>
        <authorList>
            <person name="Park H.-J."/>
            <person name="Floss D.S."/>
            <person name="Levesque-Tremblay V."/>
            <person name="Bravo A."/>
            <person name="Harrison M.J."/>
        </authorList>
    </citation>
    <scope>INDUCTION BY RAM1 AND GLOMUS VERSIFORME</scope>
</reference>
<sequence length="712" mass="82325">MHKKQLMALLMVPQTSDSQDATITKLESAYSDLESLLRSSKQMEQNIETMETRFDLLHGSITTASRRVHPLQSLSMSRKALDTRINRAISPALALLETFKLAESLQNNLLNLSSKLSTEKTHQKRLSKLLDYMDCVDQLNEAINSISEVVEPVIMRLQEVVEFISRTKAADQYRTQRLREALITLKALYETEVDEMRFEGLLDQALLHMQDEFEVLLLKLKHRKLGDMSHMQNGGEDCDDHFEVSFELGSELEIEVLRRISNTLAANDCLDICIDIYVKVRYKRAAKALMKLNPDYLRTYTPEGIDEMEWENLETSITLWTQHFEVATKKVLLSEKKLCESVLGEIIDGLIHPECFVKISDKIMAVFFRFGEGVARSNKEPQKLFKLLDMFESLEKLKPYVLEIFDGESGEDICARFRELEKLIIDASSKVFWEFGLQIEGNVDGFLPPPQDGSVPKIVRYAVNYLKYLSTENYRTTMAKVLRTELTWKTELMLSSKQSETDEDLLKHAICNVMEALQRNIESKRLSCKDKILVNIFMMNTYWYMYMRTKNTELGDLLGEKYIKESYKAVAEESAYLYQKQAWLVLVKILDQDDDDIKEQKQGKEKSIGRLVNEKIETFFKCLSEICDRHRSFYSIPDVDLREQMRDSTVKLLVPVYAEFLESYSGFLQRKVYPSPQRLQGLLGKAFGSTNDWNLNGGRNSGSLETDIRRSR</sequence>
<gene>
    <name evidence="5" type="primary">EX70I</name>
    <name evidence="7" type="ordered locus">MTR_1g017910</name>
    <name evidence="8" type="ORF">MtrunA17_Chr1g0152401</name>
</gene>
<accession>A0A396JG59</accession>
<accession>G7IBC1</accession>
<keyword id="KW-1003">Cell membrane</keyword>
<keyword id="KW-0175">Coiled coil</keyword>
<keyword id="KW-0268">Exocytosis</keyword>
<keyword id="KW-0325">Glycoprotein</keyword>
<keyword id="KW-0472">Membrane</keyword>
<keyword id="KW-0653">Protein transport</keyword>
<keyword id="KW-1185">Reference proteome</keyword>
<keyword id="KW-0732">Signal</keyword>
<keyword id="KW-0813">Transport</keyword>
<dbReference type="EMBL" id="CM001217">
    <property type="protein sequence ID" value="AES59305.1"/>
    <property type="status" value="ALT_INIT"/>
    <property type="molecule type" value="Genomic_DNA"/>
</dbReference>
<dbReference type="EMBL" id="PSQE01000001">
    <property type="protein sequence ID" value="RHN77220.1"/>
    <property type="molecule type" value="Genomic_DNA"/>
</dbReference>
<dbReference type="RefSeq" id="XP_003589054.1">
    <property type="nucleotide sequence ID" value="XM_003589006.1"/>
</dbReference>
<dbReference type="SMR" id="A0A396JG59"/>
<dbReference type="STRING" id="3880.G7IBC1"/>
<dbReference type="GlyCosmos" id="A0A396JG59">
    <property type="glycosylation" value="1 site, No reported glycans"/>
</dbReference>
<dbReference type="PaxDb" id="3880-AES59305"/>
<dbReference type="EnsemblPlants" id="rna649">
    <property type="protein sequence ID" value="RHN77220.1"/>
    <property type="gene ID" value="gene649"/>
</dbReference>
<dbReference type="GeneID" id="11416358"/>
<dbReference type="Gramene" id="rna649">
    <property type="protein sequence ID" value="RHN77220.1"/>
    <property type="gene ID" value="gene649"/>
</dbReference>
<dbReference type="KEGG" id="mtr:11416358"/>
<dbReference type="eggNOG" id="KOG2344">
    <property type="taxonomic scope" value="Eukaryota"/>
</dbReference>
<dbReference type="HOGENOM" id="CLU_025295_0_0_1"/>
<dbReference type="OrthoDB" id="1922221at2759"/>
<dbReference type="Proteomes" id="UP000002051">
    <property type="component" value="Chromosome 1"/>
</dbReference>
<dbReference type="Proteomes" id="UP000265566">
    <property type="component" value="Chromosome 1"/>
</dbReference>
<dbReference type="GO" id="GO:0000145">
    <property type="term" value="C:exocyst"/>
    <property type="evidence" value="ECO:0000318"/>
    <property type="project" value="GO_Central"/>
</dbReference>
<dbReference type="GO" id="GO:0085042">
    <property type="term" value="C:periarbuscular membrane"/>
    <property type="evidence" value="ECO:0000314"/>
    <property type="project" value="UniProtKB"/>
</dbReference>
<dbReference type="GO" id="GO:0005886">
    <property type="term" value="C:plasma membrane"/>
    <property type="evidence" value="ECO:0007669"/>
    <property type="project" value="UniProtKB-SubCell"/>
</dbReference>
<dbReference type="GO" id="GO:0005546">
    <property type="term" value="F:phosphatidylinositol-4,5-bisphosphate binding"/>
    <property type="evidence" value="ECO:0007669"/>
    <property type="project" value="InterPro"/>
</dbReference>
<dbReference type="GO" id="GO:0036377">
    <property type="term" value="P:arbuscular mycorrhizal association"/>
    <property type="evidence" value="ECO:0000315"/>
    <property type="project" value="UniProtKB"/>
</dbReference>
<dbReference type="GO" id="GO:0006887">
    <property type="term" value="P:exocytosis"/>
    <property type="evidence" value="ECO:0000318"/>
    <property type="project" value="GO_Central"/>
</dbReference>
<dbReference type="GO" id="GO:0015031">
    <property type="term" value="P:protein transport"/>
    <property type="evidence" value="ECO:0007669"/>
    <property type="project" value="UniProtKB-KW"/>
</dbReference>
<dbReference type="GO" id="GO:0009609">
    <property type="term" value="P:response to symbiotic bacterium"/>
    <property type="evidence" value="ECO:0000270"/>
    <property type="project" value="UniProtKB"/>
</dbReference>
<dbReference type="GO" id="GO:0009610">
    <property type="term" value="P:response to symbiotic fungus"/>
    <property type="evidence" value="ECO:0000270"/>
    <property type="project" value="UniProtKB"/>
</dbReference>
<dbReference type="Gene3D" id="1.20.1280.170">
    <property type="entry name" value="Exocyst complex component Exo70"/>
    <property type="match status" value="1"/>
</dbReference>
<dbReference type="InterPro" id="IPR016159">
    <property type="entry name" value="Cullin_repeat-like_dom_sf"/>
</dbReference>
<dbReference type="InterPro" id="IPR004140">
    <property type="entry name" value="Exo70"/>
</dbReference>
<dbReference type="InterPro" id="IPR046364">
    <property type="entry name" value="Exo70_C"/>
</dbReference>
<dbReference type="PANTHER" id="PTHR12542:SF90">
    <property type="entry name" value="EXOCYST COMPLEX COMPONENT EXO70I"/>
    <property type="match status" value="1"/>
</dbReference>
<dbReference type="PANTHER" id="PTHR12542">
    <property type="entry name" value="EXOCYST COMPLEX PROTEIN EXO70"/>
    <property type="match status" value="1"/>
</dbReference>
<dbReference type="Pfam" id="PF03081">
    <property type="entry name" value="Exo70_C"/>
    <property type="match status" value="1"/>
</dbReference>
<dbReference type="SUPFAM" id="SSF74788">
    <property type="entry name" value="Cullin repeat-like"/>
    <property type="match status" value="1"/>
</dbReference>
<organism>
    <name type="scientific">Medicago truncatula</name>
    <name type="common">Barrel medic</name>
    <name type="synonym">Medicago tribuloides</name>
    <dbReference type="NCBI Taxonomy" id="3880"/>
    <lineage>
        <taxon>Eukaryota</taxon>
        <taxon>Viridiplantae</taxon>
        <taxon>Streptophyta</taxon>
        <taxon>Embryophyta</taxon>
        <taxon>Tracheophyta</taxon>
        <taxon>Spermatophyta</taxon>
        <taxon>Magnoliopsida</taxon>
        <taxon>eudicotyledons</taxon>
        <taxon>Gunneridae</taxon>
        <taxon>Pentapetalae</taxon>
        <taxon>rosids</taxon>
        <taxon>fabids</taxon>
        <taxon>Fabales</taxon>
        <taxon>Fabaceae</taxon>
        <taxon>Papilionoideae</taxon>
        <taxon>50 kb inversion clade</taxon>
        <taxon>NPAAA clade</taxon>
        <taxon>Hologalegina</taxon>
        <taxon>IRL clade</taxon>
        <taxon>Trifolieae</taxon>
        <taxon>Medicago</taxon>
    </lineage>
</organism>